<proteinExistence type="inferred from homology"/>
<reference key="1">
    <citation type="journal article" date="2005" name="J. Bacteriol.">
        <title>Whole-genome sequence analysis of Pseudomonas syringae pv. phaseolicola 1448A reveals divergence among pathovars in genes involved in virulence and transposition.</title>
        <authorList>
            <person name="Joardar V."/>
            <person name="Lindeberg M."/>
            <person name="Jackson R.W."/>
            <person name="Selengut J."/>
            <person name="Dodson R."/>
            <person name="Brinkac L.M."/>
            <person name="Daugherty S.C."/>
            <person name="DeBoy R.T."/>
            <person name="Durkin A.S."/>
            <person name="Gwinn Giglio M."/>
            <person name="Madupu R."/>
            <person name="Nelson W.C."/>
            <person name="Rosovitz M.J."/>
            <person name="Sullivan S.A."/>
            <person name="Crabtree J."/>
            <person name="Creasy T."/>
            <person name="Davidsen T.M."/>
            <person name="Haft D.H."/>
            <person name="Zafar N."/>
            <person name="Zhou L."/>
            <person name="Halpin R."/>
            <person name="Holley T."/>
            <person name="Khouri H.M."/>
            <person name="Feldblyum T.V."/>
            <person name="White O."/>
            <person name="Fraser C.M."/>
            <person name="Chatterjee A.K."/>
            <person name="Cartinhour S."/>
            <person name="Schneider D."/>
            <person name="Mansfield J.W."/>
            <person name="Collmer A."/>
            <person name="Buell R."/>
        </authorList>
    </citation>
    <scope>NUCLEOTIDE SEQUENCE [LARGE SCALE GENOMIC DNA]</scope>
    <source>
        <strain>1448A / Race 6</strain>
    </source>
</reference>
<organism>
    <name type="scientific">Pseudomonas savastanoi pv. phaseolicola (strain 1448A / Race 6)</name>
    <name type="common">Pseudomonas syringae pv. phaseolicola (strain 1448A / Race 6)</name>
    <dbReference type="NCBI Taxonomy" id="264730"/>
    <lineage>
        <taxon>Bacteria</taxon>
        <taxon>Pseudomonadati</taxon>
        <taxon>Pseudomonadota</taxon>
        <taxon>Gammaproteobacteria</taxon>
        <taxon>Pseudomonadales</taxon>
        <taxon>Pseudomonadaceae</taxon>
        <taxon>Pseudomonas</taxon>
    </lineage>
</organism>
<sequence>MPELPEVETTRRGIAPHLEGQRVSRVIVRDSRLRWPIPEDLDIRLSGQRIVQVDRRAKYLLIQAEVGTLISHLGMSGNLRLVEAGLPALKHEHVDIELESGLALRYTDPRRFGAMLWSLDPHNHELLIRLGPEPLTDLFDGERLYERSRGKSIAVKPFVMDNAVVVGVGNIYATEALFAAGIDPRREAGGISRARYLKLAIEIKRILAYAIERGGTTLRDFIGGDGKPGYFQQELFVYGRGGQPCKVCGTTLREIKLGQRASVYCPKCQR</sequence>
<accession>Q48CK1</accession>
<dbReference type="EC" id="3.2.2.23" evidence="2"/>
<dbReference type="EC" id="4.2.99.18" evidence="2"/>
<dbReference type="EMBL" id="CP000058">
    <property type="protein sequence ID" value="AAZ37579.1"/>
    <property type="molecule type" value="Genomic_DNA"/>
</dbReference>
<dbReference type="RefSeq" id="WP_004654856.1">
    <property type="nucleotide sequence ID" value="NC_005773.3"/>
</dbReference>
<dbReference type="SMR" id="Q48CK1"/>
<dbReference type="KEGG" id="psp:PSPPH_4792"/>
<dbReference type="eggNOG" id="COG0266">
    <property type="taxonomic scope" value="Bacteria"/>
</dbReference>
<dbReference type="HOGENOM" id="CLU_038423_1_1_6"/>
<dbReference type="Proteomes" id="UP000000551">
    <property type="component" value="Chromosome"/>
</dbReference>
<dbReference type="GO" id="GO:0034039">
    <property type="term" value="F:8-oxo-7,8-dihydroguanine DNA N-glycosylase activity"/>
    <property type="evidence" value="ECO:0007669"/>
    <property type="project" value="TreeGrafter"/>
</dbReference>
<dbReference type="GO" id="GO:0140078">
    <property type="term" value="F:class I DNA-(apurinic or apyrimidinic site) endonuclease activity"/>
    <property type="evidence" value="ECO:0007669"/>
    <property type="project" value="UniProtKB-EC"/>
</dbReference>
<dbReference type="GO" id="GO:0003684">
    <property type="term" value="F:damaged DNA binding"/>
    <property type="evidence" value="ECO:0007669"/>
    <property type="project" value="InterPro"/>
</dbReference>
<dbReference type="GO" id="GO:0008270">
    <property type="term" value="F:zinc ion binding"/>
    <property type="evidence" value="ECO:0007669"/>
    <property type="project" value="UniProtKB-UniRule"/>
</dbReference>
<dbReference type="GO" id="GO:0006284">
    <property type="term" value="P:base-excision repair"/>
    <property type="evidence" value="ECO:0007669"/>
    <property type="project" value="InterPro"/>
</dbReference>
<dbReference type="CDD" id="cd08966">
    <property type="entry name" value="EcFpg-like_N"/>
    <property type="match status" value="1"/>
</dbReference>
<dbReference type="FunFam" id="1.10.8.50:FF:000003">
    <property type="entry name" value="Formamidopyrimidine-DNA glycosylase"/>
    <property type="match status" value="1"/>
</dbReference>
<dbReference type="FunFam" id="3.20.190.10:FF:000001">
    <property type="entry name" value="Formamidopyrimidine-DNA glycosylase"/>
    <property type="match status" value="1"/>
</dbReference>
<dbReference type="Gene3D" id="1.10.8.50">
    <property type="match status" value="1"/>
</dbReference>
<dbReference type="Gene3D" id="3.20.190.10">
    <property type="entry name" value="MutM-like, N-terminal"/>
    <property type="match status" value="1"/>
</dbReference>
<dbReference type="HAMAP" id="MF_00103">
    <property type="entry name" value="Fapy_DNA_glycosyl"/>
    <property type="match status" value="1"/>
</dbReference>
<dbReference type="InterPro" id="IPR015886">
    <property type="entry name" value="DNA_glyclase/AP_lyase_DNA-bd"/>
</dbReference>
<dbReference type="InterPro" id="IPR015887">
    <property type="entry name" value="DNA_glyclase_Znf_dom_DNA_BS"/>
</dbReference>
<dbReference type="InterPro" id="IPR020629">
    <property type="entry name" value="Formamido-pyr_DNA_Glyclase"/>
</dbReference>
<dbReference type="InterPro" id="IPR012319">
    <property type="entry name" value="FPG_cat"/>
</dbReference>
<dbReference type="InterPro" id="IPR035937">
    <property type="entry name" value="MutM-like_N-ter"/>
</dbReference>
<dbReference type="InterPro" id="IPR010979">
    <property type="entry name" value="Ribosomal_uS13-like_H2TH"/>
</dbReference>
<dbReference type="InterPro" id="IPR000214">
    <property type="entry name" value="Znf_DNA_glyclase/AP_lyase"/>
</dbReference>
<dbReference type="InterPro" id="IPR010663">
    <property type="entry name" value="Znf_FPG/IleRS"/>
</dbReference>
<dbReference type="NCBIfam" id="TIGR00577">
    <property type="entry name" value="fpg"/>
    <property type="match status" value="1"/>
</dbReference>
<dbReference type="NCBIfam" id="NF002211">
    <property type="entry name" value="PRK01103.1"/>
    <property type="match status" value="1"/>
</dbReference>
<dbReference type="PANTHER" id="PTHR22993">
    <property type="entry name" value="FORMAMIDOPYRIMIDINE-DNA GLYCOSYLASE"/>
    <property type="match status" value="1"/>
</dbReference>
<dbReference type="PANTHER" id="PTHR22993:SF9">
    <property type="entry name" value="FORMAMIDOPYRIMIDINE-DNA GLYCOSYLASE"/>
    <property type="match status" value="1"/>
</dbReference>
<dbReference type="Pfam" id="PF01149">
    <property type="entry name" value="Fapy_DNA_glyco"/>
    <property type="match status" value="1"/>
</dbReference>
<dbReference type="Pfam" id="PF06831">
    <property type="entry name" value="H2TH"/>
    <property type="match status" value="1"/>
</dbReference>
<dbReference type="Pfam" id="PF06827">
    <property type="entry name" value="zf-FPG_IleRS"/>
    <property type="match status" value="1"/>
</dbReference>
<dbReference type="SMART" id="SM00898">
    <property type="entry name" value="Fapy_DNA_glyco"/>
    <property type="match status" value="1"/>
</dbReference>
<dbReference type="SMART" id="SM01232">
    <property type="entry name" value="H2TH"/>
    <property type="match status" value="1"/>
</dbReference>
<dbReference type="SUPFAM" id="SSF57716">
    <property type="entry name" value="Glucocorticoid receptor-like (DNA-binding domain)"/>
    <property type="match status" value="1"/>
</dbReference>
<dbReference type="SUPFAM" id="SSF81624">
    <property type="entry name" value="N-terminal domain of MutM-like DNA repair proteins"/>
    <property type="match status" value="1"/>
</dbReference>
<dbReference type="SUPFAM" id="SSF46946">
    <property type="entry name" value="S13-like H2TH domain"/>
    <property type="match status" value="1"/>
</dbReference>
<dbReference type="PROSITE" id="PS51068">
    <property type="entry name" value="FPG_CAT"/>
    <property type="match status" value="1"/>
</dbReference>
<dbReference type="PROSITE" id="PS01242">
    <property type="entry name" value="ZF_FPG_1"/>
    <property type="match status" value="1"/>
</dbReference>
<dbReference type="PROSITE" id="PS51066">
    <property type="entry name" value="ZF_FPG_2"/>
    <property type="match status" value="1"/>
</dbReference>
<comment type="function">
    <text evidence="2">Involved in base excision repair of DNA damaged by oxidation or by mutagenic agents. Acts as a DNA glycosylase that recognizes and removes damaged bases. Has a preference for oxidized purines, such as 7,8-dihydro-8-oxoguanine (8-oxoG). Has AP (apurinic/apyrimidinic) lyase activity and introduces nicks in the DNA strand. Cleaves the DNA backbone by beta-delta elimination to generate a single-strand break at the site of the removed base with both 3'- and 5'-phosphates.</text>
</comment>
<comment type="catalytic activity">
    <reaction evidence="2">
        <text>Hydrolysis of DNA containing ring-opened 7-methylguanine residues, releasing 2,6-diamino-4-hydroxy-5-(N-methyl)formamidopyrimidine.</text>
        <dbReference type="EC" id="3.2.2.23"/>
    </reaction>
</comment>
<comment type="catalytic activity">
    <reaction evidence="2">
        <text>2'-deoxyribonucleotide-(2'-deoxyribose 5'-phosphate)-2'-deoxyribonucleotide-DNA = a 3'-end 2'-deoxyribonucleotide-(2,3-dehydro-2,3-deoxyribose 5'-phosphate)-DNA + a 5'-end 5'-phospho-2'-deoxyribonucleoside-DNA + H(+)</text>
        <dbReference type="Rhea" id="RHEA:66592"/>
        <dbReference type="Rhea" id="RHEA-COMP:13180"/>
        <dbReference type="Rhea" id="RHEA-COMP:16897"/>
        <dbReference type="Rhea" id="RHEA-COMP:17067"/>
        <dbReference type="ChEBI" id="CHEBI:15378"/>
        <dbReference type="ChEBI" id="CHEBI:136412"/>
        <dbReference type="ChEBI" id="CHEBI:157695"/>
        <dbReference type="ChEBI" id="CHEBI:167181"/>
        <dbReference type="EC" id="4.2.99.18"/>
    </reaction>
</comment>
<comment type="cofactor">
    <cofactor evidence="2">
        <name>Zn(2+)</name>
        <dbReference type="ChEBI" id="CHEBI:29105"/>
    </cofactor>
    <text evidence="2">Binds 1 zinc ion per subunit.</text>
</comment>
<comment type="subunit">
    <text evidence="2">Monomer.</text>
</comment>
<comment type="similarity">
    <text evidence="2">Belongs to the FPG family.</text>
</comment>
<feature type="initiator methionine" description="Removed" evidence="1">
    <location>
        <position position="1"/>
    </location>
</feature>
<feature type="chain" id="PRO_0000228460" description="Formamidopyrimidine-DNA glycosylase">
    <location>
        <begin position="2"/>
        <end position="270"/>
    </location>
</feature>
<feature type="zinc finger region" description="FPG-type" evidence="2">
    <location>
        <begin position="236"/>
        <end position="270"/>
    </location>
</feature>
<feature type="active site" description="Schiff-base intermediate with DNA" evidence="2">
    <location>
        <position position="2"/>
    </location>
</feature>
<feature type="active site" description="Proton donor" evidence="2">
    <location>
        <position position="3"/>
    </location>
</feature>
<feature type="active site" description="Proton donor; for beta-elimination activity" evidence="2">
    <location>
        <position position="58"/>
    </location>
</feature>
<feature type="active site" description="Proton donor; for delta-elimination activity" evidence="2">
    <location>
        <position position="260"/>
    </location>
</feature>
<feature type="binding site" evidence="2">
    <location>
        <position position="91"/>
    </location>
    <ligand>
        <name>DNA</name>
        <dbReference type="ChEBI" id="CHEBI:16991"/>
    </ligand>
</feature>
<feature type="binding site" evidence="2">
    <location>
        <position position="110"/>
    </location>
    <ligand>
        <name>DNA</name>
        <dbReference type="ChEBI" id="CHEBI:16991"/>
    </ligand>
</feature>
<feature type="binding site" evidence="2">
    <location>
        <position position="151"/>
    </location>
    <ligand>
        <name>DNA</name>
        <dbReference type="ChEBI" id="CHEBI:16991"/>
    </ligand>
</feature>
<gene>
    <name evidence="2" type="primary">mutM</name>
    <name evidence="2" type="synonym">fpg</name>
    <name type="ordered locus">PSPPH_4792</name>
</gene>
<protein>
    <recommendedName>
        <fullName evidence="2">Formamidopyrimidine-DNA glycosylase</fullName>
        <shortName evidence="2">Fapy-DNA glycosylase</shortName>
        <ecNumber evidence="2">3.2.2.23</ecNumber>
    </recommendedName>
    <alternativeName>
        <fullName evidence="2">DNA-(apurinic or apyrimidinic site) lyase MutM</fullName>
        <shortName evidence="2">AP lyase MutM</shortName>
        <ecNumber evidence="2">4.2.99.18</ecNumber>
    </alternativeName>
</protein>
<name>FPG_PSE14</name>
<keyword id="KW-0227">DNA damage</keyword>
<keyword id="KW-0234">DNA repair</keyword>
<keyword id="KW-0238">DNA-binding</keyword>
<keyword id="KW-0326">Glycosidase</keyword>
<keyword id="KW-0378">Hydrolase</keyword>
<keyword id="KW-0456">Lyase</keyword>
<keyword id="KW-0479">Metal-binding</keyword>
<keyword id="KW-0511">Multifunctional enzyme</keyword>
<keyword id="KW-0862">Zinc</keyword>
<keyword id="KW-0863">Zinc-finger</keyword>
<evidence type="ECO:0000250" key="1"/>
<evidence type="ECO:0000255" key="2">
    <source>
        <dbReference type="HAMAP-Rule" id="MF_00103"/>
    </source>
</evidence>